<evidence type="ECO:0000255" key="1">
    <source>
        <dbReference type="HAMAP-Rule" id="MF_01559"/>
    </source>
</evidence>
<reference key="1">
    <citation type="journal article" date="2008" name="PLoS ONE">
        <title>Comparative analysis of Acinetobacters: three genomes for three lifestyles.</title>
        <authorList>
            <person name="Vallenet D."/>
            <person name="Nordmann P."/>
            <person name="Barbe V."/>
            <person name="Poirel L."/>
            <person name="Mangenot S."/>
            <person name="Bataille E."/>
            <person name="Dossat C."/>
            <person name="Gas S."/>
            <person name="Kreimeyer A."/>
            <person name="Lenoble P."/>
            <person name="Oztas S."/>
            <person name="Poulain J."/>
            <person name="Segurens B."/>
            <person name="Robert C."/>
            <person name="Abergel C."/>
            <person name="Claverie J.-M."/>
            <person name="Raoult D."/>
            <person name="Medigue C."/>
            <person name="Weissenbach J."/>
            <person name="Cruveiller S."/>
        </authorList>
    </citation>
    <scope>NUCLEOTIDE SEQUENCE [LARGE SCALE GENOMIC DNA]</scope>
    <source>
        <strain>AYE</strain>
    </source>
</reference>
<accession>B0V6L1</accession>
<gene>
    <name evidence="1" type="primary">lldD</name>
    <name type="ordered locus">ABAYE3797</name>
</gene>
<organism>
    <name type="scientific">Acinetobacter baumannii (strain AYE)</name>
    <dbReference type="NCBI Taxonomy" id="509173"/>
    <lineage>
        <taxon>Bacteria</taxon>
        <taxon>Pseudomonadati</taxon>
        <taxon>Pseudomonadota</taxon>
        <taxon>Gammaproteobacteria</taxon>
        <taxon>Moraxellales</taxon>
        <taxon>Moraxellaceae</taxon>
        <taxon>Acinetobacter</taxon>
        <taxon>Acinetobacter calcoaceticus/baumannii complex</taxon>
    </lineage>
</organism>
<protein>
    <recommendedName>
        <fullName evidence="1">L-lactate dehydrogenase</fullName>
        <ecNumber evidence="1">1.1.-.-</ecNumber>
    </recommendedName>
</protein>
<sequence length="383" mass="41648">MIISSGNDYRAAAQRRLPPFLFHYIDGGAYAEYTLKRNVQDLSEIALRQRVLNDMSALSLETKLFNETLSMPVALAPVGLTGMYARRGEVQAAMAADKKGIPFTLSTVSVCPIEEVAPAINRPMWFQLYVLRDRGFMRNALERAKAAGCSTLVFTVDMPVPGARYRDAHSGMSGPNAAMRRYMQSVFHPHWSWNVGLMGRPHDLGNISKYLGKPTGLEDYIGWLGSNFDPSISWKDLEWIREFWDGPMVIKGILDPEDAKDAVRFGADGIVVSNHGGRQLDGVMSSARALPAIADAVKGDLAILADSGIRNGLDVVRMLALGADTVLLGRAFVYALAAAGGQGVSNLLDLIDKEMRVAMTLTGAKSISDINADCLVQAIKQGL</sequence>
<keyword id="KW-0997">Cell inner membrane</keyword>
<keyword id="KW-1003">Cell membrane</keyword>
<keyword id="KW-0285">Flavoprotein</keyword>
<keyword id="KW-0288">FMN</keyword>
<keyword id="KW-0472">Membrane</keyword>
<keyword id="KW-0560">Oxidoreductase</keyword>
<dbReference type="EC" id="1.1.-.-" evidence="1"/>
<dbReference type="EMBL" id="CU459141">
    <property type="protein sequence ID" value="CAM88558.1"/>
    <property type="molecule type" value="Genomic_DNA"/>
</dbReference>
<dbReference type="RefSeq" id="WP_000587282.1">
    <property type="nucleotide sequence ID" value="NZ_JBDGFB010000006.1"/>
</dbReference>
<dbReference type="SMR" id="B0V6L1"/>
<dbReference type="EnsemblBacteria" id="CAM88558">
    <property type="protein sequence ID" value="CAM88558"/>
    <property type="gene ID" value="ABAYE3797"/>
</dbReference>
<dbReference type="GeneID" id="92892082"/>
<dbReference type="KEGG" id="aby:ABAYE3797"/>
<dbReference type="HOGENOM" id="CLU_020639_0_0_6"/>
<dbReference type="GO" id="GO:0005886">
    <property type="term" value="C:plasma membrane"/>
    <property type="evidence" value="ECO:0007669"/>
    <property type="project" value="UniProtKB-SubCell"/>
</dbReference>
<dbReference type="GO" id="GO:0010181">
    <property type="term" value="F:FMN binding"/>
    <property type="evidence" value="ECO:0007669"/>
    <property type="project" value="InterPro"/>
</dbReference>
<dbReference type="GO" id="GO:0004459">
    <property type="term" value="F:L-lactate dehydrogenase activity"/>
    <property type="evidence" value="ECO:0007669"/>
    <property type="project" value="UniProtKB-UniRule"/>
</dbReference>
<dbReference type="GO" id="GO:0009060">
    <property type="term" value="P:aerobic respiration"/>
    <property type="evidence" value="ECO:0007669"/>
    <property type="project" value="TreeGrafter"/>
</dbReference>
<dbReference type="GO" id="GO:0006089">
    <property type="term" value="P:lactate metabolic process"/>
    <property type="evidence" value="ECO:0007669"/>
    <property type="project" value="UniProtKB-UniRule"/>
</dbReference>
<dbReference type="CDD" id="cd02809">
    <property type="entry name" value="alpha_hydroxyacid_oxid_FMN"/>
    <property type="match status" value="1"/>
</dbReference>
<dbReference type="FunFam" id="3.20.20.70:FF:000029">
    <property type="entry name" value="L-lactate dehydrogenase"/>
    <property type="match status" value="1"/>
</dbReference>
<dbReference type="Gene3D" id="3.20.20.70">
    <property type="entry name" value="Aldolase class I"/>
    <property type="match status" value="1"/>
</dbReference>
<dbReference type="HAMAP" id="MF_01559">
    <property type="entry name" value="L_lact_dehydr"/>
    <property type="match status" value="1"/>
</dbReference>
<dbReference type="InterPro" id="IPR013785">
    <property type="entry name" value="Aldolase_TIM"/>
</dbReference>
<dbReference type="InterPro" id="IPR012133">
    <property type="entry name" value="Alpha-hydoxy_acid_DH_FMN"/>
</dbReference>
<dbReference type="InterPro" id="IPR000262">
    <property type="entry name" value="FMN-dep_DH"/>
</dbReference>
<dbReference type="InterPro" id="IPR037396">
    <property type="entry name" value="FMN_HAD"/>
</dbReference>
<dbReference type="InterPro" id="IPR008259">
    <property type="entry name" value="FMN_hydac_DH_AS"/>
</dbReference>
<dbReference type="InterPro" id="IPR020920">
    <property type="entry name" value="LldD"/>
</dbReference>
<dbReference type="NCBIfam" id="NF033901">
    <property type="entry name" value="L_lactate_LldD"/>
    <property type="match status" value="1"/>
</dbReference>
<dbReference type="NCBIfam" id="NF008398">
    <property type="entry name" value="PRK11197.1"/>
    <property type="match status" value="1"/>
</dbReference>
<dbReference type="PANTHER" id="PTHR10578:SF85">
    <property type="entry name" value="L-LACTATE DEHYDROGENASE"/>
    <property type="match status" value="1"/>
</dbReference>
<dbReference type="PANTHER" id="PTHR10578">
    <property type="entry name" value="S -2-HYDROXY-ACID OXIDASE-RELATED"/>
    <property type="match status" value="1"/>
</dbReference>
<dbReference type="Pfam" id="PF01070">
    <property type="entry name" value="FMN_dh"/>
    <property type="match status" value="1"/>
</dbReference>
<dbReference type="PIRSF" id="PIRSF000138">
    <property type="entry name" value="Al-hdrx_acd_dh"/>
    <property type="match status" value="1"/>
</dbReference>
<dbReference type="SUPFAM" id="SSF51395">
    <property type="entry name" value="FMN-linked oxidoreductases"/>
    <property type="match status" value="1"/>
</dbReference>
<dbReference type="PROSITE" id="PS00557">
    <property type="entry name" value="FMN_HYDROXY_ACID_DH_1"/>
    <property type="match status" value="1"/>
</dbReference>
<dbReference type="PROSITE" id="PS51349">
    <property type="entry name" value="FMN_HYDROXY_ACID_DH_2"/>
    <property type="match status" value="1"/>
</dbReference>
<comment type="function">
    <text evidence="1">Catalyzes the conversion of L-lactate to pyruvate. Is coupled to the respiratory chain.</text>
</comment>
<comment type="catalytic activity">
    <reaction evidence="1">
        <text>(S)-lactate + A = pyruvate + AH2</text>
        <dbReference type="Rhea" id="RHEA:45816"/>
        <dbReference type="ChEBI" id="CHEBI:13193"/>
        <dbReference type="ChEBI" id="CHEBI:15361"/>
        <dbReference type="ChEBI" id="CHEBI:16651"/>
        <dbReference type="ChEBI" id="CHEBI:17499"/>
    </reaction>
</comment>
<comment type="cofactor">
    <cofactor evidence="1">
        <name>FMN</name>
        <dbReference type="ChEBI" id="CHEBI:58210"/>
    </cofactor>
</comment>
<comment type="subcellular location">
    <subcellularLocation>
        <location evidence="1">Cell inner membrane</location>
        <topology evidence="1">Peripheral membrane protein</topology>
    </subcellularLocation>
</comment>
<comment type="similarity">
    <text evidence="1">Belongs to the FMN-dependent alpha-hydroxy acid dehydrogenase family.</text>
</comment>
<proteinExistence type="inferred from homology"/>
<feature type="chain" id="PRO_0000383408" description="L-lactate dehydrogenase">
    <location>
        <begin position="1"/>
        <end position="383"/>
    </location>
</feature>
<feature type="domain" description="FMN hydroxy acid dehydrogenase" evidence="1">
    <location>
        <begin position="1"/>
        <end position="380"/>
    </location>
</feature>
<feature type="active site" description="Proton acceptor" evidence="1">
    <location>
        <position position="275"/>
    </location>
</feature>
<feature type="binding site" evidence="1">
    <location>
        <position position="24"/>
    </location>
    <ligand>
        <name>substrate</name>
    </ligand>
</feature>
<feature type="binding site" evidence="1">
    <location>
        <position position="106"/>
    </location>
    <ligand>
        <name>FMN</name>
        <dbReference type="ChEBI" id="CHEBI:58210"/>
    </ligand>
</feature>
<feature type="binding site" evidence="1">
    <location>
        <position position="127"/>
    </location>
    <ligand>
        <name>FMN</name>
        <dbReference type="ChEBI" id="CHEBI:58210"/>
    </ligand>
</feature>
<feature type="binding site" evidence="1">
    <location>
        <position position="129"/>
    </location>
    <ligand>
        <name>substrate</name>
    </ligand>
</feature>
<feature type="binding site" evidence="1">
    <location>
        <position position="155"/>
    </location>
    <ligand>
        <name>FMN</name>
        <dbReference type="ChEBI" id="CHEBI:58210"/>
    </ligand>
</feature>
<feature type="binding site" evidence="1">
    <location>
        <position position="164"/>
    </location>
    <ligand>
        <name>substrate</name>
    </ligand>
</feature>
<feature type="binding site" evidence="1">
    <location>
        <position position="251"/>
    </location>
    <ligand>
        <name>FMN</name>
        <dbReference type="ChEBI" id="CHEBI:58210"/>
    </ligand>
</feature>
<feature type="binding site" evidence="1">
    <location>
        <position position="278"/>
    </location>
    <ligand>
        <name>substrate</name>
    </ligand>
</feature>
<feature type="binding site" evidence="1">
    <location>
        <begin position="306"/>
        <end position="330"/>
    </location>
    <ligand>
        <name>FMN</name>
        <dbReference type="ChEBI" id="CHEBI:58210"/>
    </ligand>
</feature>
<name>LLDD_ACIBY</name>